<dbReference type="EMBL" id="L77117">
    <property type="protein sequence ID" value="AAB98881.1"/>
    <property type="molecule type" value="Genomic_DNA"/>
</dbReference>
<dbReference type="PIR" id="B64409">
    <property type="entry name" value="B64409"/>
</dbReference>
<dbReference type="SMR" id="Q58284"/>
<dbReference type="STRING" id="243232.MJ_0874"/>
<dbReference type="PaxDb" id="243232-MJ_0874"/>
<dbReference type="DNASU" id="1451763"/>
<dbReference type="EnsemblBacteria" id="AAB98881">
    <property type="protein sequence ID" value="AAB98881"/>
    <property type="gene ID" value="MJ_0874"/>
</dbReference>
<dbReference type="KEGG" id="mja:MJ_0874"/>
<dbReference type="eggNOG" id="arCOG00199">
    <property type="taxonomic scope" value="Archaea"/>
</dbReference>
<dbReference type="HOGENOM" id="CLU_2392908_0_0_2"/>
<dbReference type="InParanoid" id="Q58284"/>
<dbReference type="Proteomes" id="UP000000805">
    <property type="component" value="Chromosome"/>
</dbReference>
<comment type="similarity">
    <text evidence="1">To B.subtilis YdcN C-terminal region.</text>
</comment>
<keyword id="KW-1185">Reference proteome</keyword>
<reference key="1">
    <citation type="journal article" date="1996" name="Science">
        <title>Complete genome sequence of the methanogenic archaeon, Methanococcus jannaschii.</title>
        <authorList>
            <person name="Bult C.J."/>
            <person name="White O."/>
            <person name="Olsen G.J."/>
            <person name="Zhou L."/>
            <person name="Fleischmann R.D."/>
            <person name="Sutton G.G."/>
            <person name="Blake J.A."/>
            <person name="FitzGerald L.M."/>
            <person name="Clayton R.A."/>
            <person name="Gocayne J.D."/>
            <person name="Kerlavage A.R."/>
            <person name="Dougherty B.A."/>
            <person name="Tomb J.-F."/>
            <person name="Adams M.D."/>
            <person name="Reich C.I."/>
            <person name="Overbeek R."/>
            <person name="Kirkness E.F."/>
            <person name="Weinstock K.G."/>
            <person name="Merrick J.M."/>
            <person name="Glodek A."/>
            <person name="Scott J.L."/>
            <person name="Geoghagen N.S.M."/>
            <person name="Weidman J.F."/>
            <person name="Fuhrmann J.L."/>
            <person name="Nguyen D."/>
            <person name="Utterback T.R."/>
            <person name="Kelley J.M."/>
            <person name="Peterson J.D."/>
            <person name="Sadow P.W."/>
            <person name="Hanna M.C."/>
            <person name="Cotton M.D."/>
            <person name="Roberts K.M."/>
            <person name="Hurst M.A."/>
            <person name="Kaine B.P."/>
            <person name="Borodovsky M."/>
            <person name="Klenk H.-P."/>
            <person name="Fraser C.M."/>
            <person name="Smith H.O."/>
            <person name="Woese C.R."/>
            <person name="Venter J.C."/>
        </authorList>
    </citation>
    <scope>NUCLEOTIDE SEQUENCE [LARGE SCALE GENOMIC DNA]</scope>
    <source>
        <strain>ATCC 43067 / DSM 2661 / JAL-1 / JCM 10045 / NBRC 100440</strain>
    </source>
</reference>
<proteinExistence type="predicted"/>
<accession>Q58284</accession>
<protein>
    <recommendedName>
        <fullName>Uncharacterized protein MJ0874</fullName>
    </recommendedName>
</protein>
<evidence type="ECO:0000305" key="1"/>
<organism>
    <name type="scientific">Methanocaldococcus jannaschii (strain ATCC 43067 / DSM 2661 / JAL-1 / JCM 10045 / NBRC 100440)</name>
    <name type="common">Methanococcus jannaschii</name>
    <dbReference type="NCBI Taxonomy" id="243232"/>
    <lineage>
        <taxon>Archaea</taxon>
        <taxon>Methanobacteriati</taxon>
        <taxon>Methanobacteriota</taxon>
        <taxon>Methanomada group</taxon>
        <taxon>Methanococci</taxon>
        <taxon>Methanococcales</taxon>
        <taxon>Methanocaldococcaceae</taxon>
        <taxon>Methanocaldococcus</taxon>
    </lineage>
</organism>
<gene>
    <name type="ordered locus">MJ0874</name>
</gene>
<sequence length="93" mass="10860">MMLLLAILHKNDADYFIAEAMGVKIIEEEAYKKISKETFEEALKELKNSDVVVYTDFPIGEMNELNLKLIEEAKNLKKRMIFYEDDISVLKEI</sequence>
<feature type="chain" id="PRO_0000107087" description="Uncharacterized protein MJ0874">
    <location>
        <begin position="1"/>
        <end position="93"/>
    </location>
</feature>
<name>Y874_METJA</name>